<gene>
    <name evidence="1" type="primary">dinB</name>
    <name type="ordered locus">SAK_1734</name>
</gene>
<evidence type="ECO:0000255" key="1">
    <source>
        <dbReference type="HAMAP-Rule" id="MF_01113"/>
    </source>
</evidence>
<keyword id="KW-0963">Cytoplasm</keyword>
<keyword id="KW-0227">DNA damage</keyword>
<keyword id="KW-0234">DNA repair</keyword>
<keyword id="KW-0235">DNA replication</keyword>
<keyword id="KW-0238">DNA-binding</keyword>
<keyword id="KW-0239">DNA-directed DNA polymerase</keyword>
<keyword id="KW-0460">Magnesium</keyword>
<keyword id="KW-0479">Metal-binding</keyword>
<keyword id="KW-0515">Mutator protein</keyword>
<keyword id="KW-0548">Nucleotidyltransferase</keyword>
<keyword id="KW-0808">Transferase</keyword>
<reference key="1">
    <citation type="journal article" date="2005" name="Proc. Natl. Acad. Sci. U.S.A.">
        <title>Genome analysis of multiple pathogenic isolates of Streptococcus agalactiae: implications for the microbial 'pan-genome'.</title>
        <authorList>
            <person name="Tettelin H."/>
            <person name="Masignani V."/>
            <person name="Cieslewicz M.J."/>
            <person name="Donati C."/>
            <person name="Medini D."/>
            <person name="Ward N.L."/>
            <person name="Angiuoli S.V."/>
            <person name="Crabtree J."/>
            <person name="Jones A.L."/>
            <person name="Durkin A.S."/>
            <person name="DeBoy R.T."/>
            <person name="Davidsen T.M."/>
            <person name="Mora M."/>
            <person name="Scarselli M."/>
            <person name="Margarit y Ros I."/>
            <person name="Peterson J.D."/>
            <person name="Hauser C.R."/>
            <person name="Sundaram J.P."/>
            <person name="Nelson W.C."/>
            <person name="Madupu R."/>
            <person name="Brinkac L.M."/>
            <person name="Dodson R.J."/>
            <person name="Rosovitz M.J."/>
            <person name="Sullivan S.A."/>
            <person name="Daugherty S.C."/>
            <person name="Haft D.H."/>
            <person name="Selengut J."/>
            <person name="Gwinn M.L."/>
            <person name="Zhou L."/>
            <person name="Zafar N."/>
            <person name="Khouri H."/>
            <person name="Radune D."/>
            <person name="Dimitrov G."/>
            <person name="Watkins K."/>
            <person name="O'Connor K.J."/>
            <person name="Smith S."/>
            <person name="Utterback T.R."/>
            <person name="White O."/>
            <person name="Rubens C.E."/>
            <person name="Grandi G."/>
            <person name="Madoff L.C."/>
            <person name="Kasper D.L."/>
            <person name="Telford J.L."/>
            <person name="Wessels M.R."/>
            <person name="Rappuoli R."/>
            <person name="Fraser C.M."/>
        </authorList>
    </citation>
    <scope>NUCLEOTIDE SEQUENCE [LARGE SCALE GENOMIC DNA]</scope>
    <source>
        <strain>ATCC 27591 / A909 / CDC SS700</strain>
    </source>
</reference>
<dbReference type="EC" id="2.7.7.7" evidence="1"/>
<dbReference type="EMBL" id="CP000114">
    <property type="protein sequence ID" value="ABA45315.1"/>
    <property type="molecule type" value="Genomic_DNA"/>
</dbReference>
<dbReference type="RefSeq" id="WP_000904560.1">
    <property type="nucleotide sequence ID" value="NC_007432.1"/>
</dbReference>
<dbReference type="SMR" id="Q3JZG9"/>
<dbReference type="KEGG" id="sak:SAK_1734"/>
<dbReference type="HOGENOM" id="CLU_012348_1_2_9"/>
<dbReference type="GO" id="GO:0005829">
    <property type="term" value="C:cytosol"/>
    <property type="evidence" value="ECO:0007669"/>
    <property type="project" value="TreeGrafter"/>
</dbReference>
<dbReference type="GO" id="GO:0003684">
    <property type="term" value="F:damaged DNA binding"/>
    <property type="evidence" value="ECO:0007669"/>
    <property type="project" value="InterPro"/>
</dbReference>
<dbReference type="GO" id="GO:0003887">
    <property type="term" value="F:DNA-directed DNA polymerase activity"/>
    <property type="evidence" value="ECO:0007669"/>
    <property type="project" value="UniProtKB-UniRule"/>
</dbReference>
<dbReference type="GO" id="GO:0000287">
    <property type="term" value="F:magnesium ion binding"/>
    <property type="evidence" value="ECO:0007669"/>
    <property type="project" value="UniProtKB-UniRule"/>
</dbReference>
<dbReference type="GO" id="GO:0006261">
    <property type="term" value="P:DNA-templated DNA replication"/>
    <property type="evidence" value="ECO:0007669"/>
    <property type="project" value="UniProtKB-UniRule"/>
</dbReference>
<dbReference type="GO" id="GO:0042276">
    <property type="term" value="P:error-prone translesion synthesis"/>
    <property type="evidence" value="ECO:0007669"/>
    <property type="project" value="TreeGrafter"/>
</dbReference>
<dbReference type="GO" id="GO:0009432">
    <property type="term" value="P:SOS response"/>
    <property type="evidence" value="ECO:0007669"/>
    <property type="project" value="TreeGrafter"/>
</dbReference>
<dbReference type="CDD" id="cd03586">
    <property type="entry name" value="PolY_Pol_IV_kappa"/>
    <property type="match status" value="1"/>
</dbReference>
<dbReference type="FunFam" id="3.30.1490.100:FF:000004">
    <property type="entry name" value="DNA polymerase IV"/>
    <property type="match status" value="1"/>
</dbReference>
<dbReference type="FunFam" id="3.40.1170.60:FF:000001">
    <property type="entry name" value="DNA polymerase IV"/>
    <property type="match status" value="1"/>
</dbReference>
<dbReference type="Gene3D" id="3.30.70.270">
    <property type="match status" value="1"/>
</dbReference>
<dbReference type="Gene3D" id="3.40.1170.60">
    <property type="match status" value="1"/>
</dbReference>
<dbReference type="Gene3D" id="1.10.150.20">
    <property type="entry name" value="5' to 3' exonuclease, C-terminal subdomain"/>
    <property type="match status" value="1"/>
</dbReference>
<dbReference type="Gene3D" id="3.30.1490.100">
    <property type="entry name" value="DNA polymerase, Y-family, little finger domain"/>
    <property type="match status" value="1"/>
</dbReference>
<dbReference type="HAMAP" id="MF_01113">
    <property type="entry name" value="DNApol_IV"/>
    <property type="match status" value="1"/>
</dbReference>
<dbReference type="InterPro" id="IPR043502">
    <property type="entry name" value="DNA/RNA_pol_sf"/>
</dbReference>
<dbReference type="InterPro" id="IPR036775">
    <property type="entry name" value="DNA_pol_Y-fam_lit_finger_sf"/>
</dbReference>
<dbReference type="InterPro" id="IPR017961">
    <property type="entry name" value="DNA_pol_Y-fam_little_finger"/>
</dbReference>
<dbReference type="InterPro" id="IPR050116">
    <property type="entry name" value="DNA_polymerase-Y"/>
</dbReference>
<dbReference type="InterPro" id="IPR022880">
    <property type="entry name" value="DNApol_IV"/>
</dbReference>
<dbReference type="InterPro" id="IPR024728">
    <property type="entry name" value="PolY_HhH_motif"/>
</dbReference>
<dbReference type="InterPro" id="IPR043128">
    <property type="entry name" value="Rev_trsase/Diguanyl_cyclase"/>
</dbReference>
<dbReference type="InterPro" id="IPR001126">
    <property type="entry name" value="UmuC"/>
</dbReference>
<dbReference type="NCBIfam" id="NF002677">
    <property type="entry name" value="PRK02406.1"/>
    <property type="match status" value="1"/>
</dbReference>
<dbReference type="NCBIfam" id="NF010731">
    <property type="entry name" value="PRK14133.1"/>
    <property type="match status" value="1"/>
</dbReference>
<dbReference type="PANTHER" id="PTHR11076:SF33">
    <property type="entry name" value="DNA POLYMERASE KAPPA"/>
    <property type="match status" value="1"/>
</dbReference>
<dbReference type="PANTHER" id="PTHR11076">
    <property type="entry name" value="DNA REPAIR POLYMERASE UMUC / TRANSFERASE FAMILY MEMBER"/>
    <property type="match status" value="1"/>
</dbReference>
<dbReference type="Pfam" id="PF00817">
    <property type="entry name" value="IMS"/>
    <property type="match status" value="1"/>
</dbReference>
<dbReference type="Pfam" id="PF11799">
    <property type="entry name" value="IMS_C"/>
    <property type="match status" value="1"/>
</dbReference>
<dbReference type="Pfam" id="PF11798">
    <property type="entry name" value="IMS_HHH"/>
    <property type="match status" value="1"/>
</dbReference>
<dbReference type="SUPFAM" id="SSF56672">
    <property type="entry name" value="DNA/RNA polymerases"/>
    <property type="match status" value="1"/>
</dbReference>
<dbReference type="SUPFAM" id="SSF100879">
    <property type="entry name" value="Lesion bypass DNA polymerase (Y-family), little finger domain"/>
    <property type="match status" value="1"/>
</dbReference>
<dbReference type="PROSITE" id="PS50173">
    <property type="entry name" value="UMUC"/>
    <property type="match status" value="1"/>
</dbReference>
<accession>Q3JZG9</accession>
<proteinExistence type="inferred from homology"/>
<feature type="chain" id="PRO_1000084948" description="DNA polymerase IV">
    <location>
        <begin position="1"/>
        <end position="364"/>
    </location>
</feature>
<feature type="domain" description="UmuC" evidence="1">
    <location>
        <begin position="14"/>
        <end position="198"/>
    </location>
</feature>
<feature type="active site" evidence="1">
    <location>
        <position position="117"/>
    </location>
</feature>
<feature type="binding site" evidence="1">
    <location>
        <position position="18"/>
    </location>
    <ligand>
        <name>Mg(2+)</name>
        <dbReference type="ChEBI" id="CHEBI:18420"/>
    </ligand>
</feature>
<feature type="binding site" evidence="1">
    <location>
        <position position="116"/>
    </location>
    <ligand>
        <name>Mg(2+)</name>
        <dbReference type="ChEBI" id="CHEBI:18420"/>
    </ligand>
</feature>
<feature type="site" description="Substrate discrimination" evidence="1">
    <location>
        <position position="23"/>
    </location>
</feature>
<sequence>MLIFPLINDTSRKIIHIDMDAFFASVEERDNPSLKGKPVIIGSDPRKTGGRGVVSTCNYEARKFGVHSAMSSKEAYERCPQAIFISGNYQKYRQVGMEVRDIFKKYTDLVEPMSIDEAYLDVTENKMGIKSAVKLAKMIQYDIWNDVHLTCSAGISYNKFLAKLASDFEKPKGLTLILPDQAQDFLKPLPIEKFHGVGKRSVEKLHALGVYTGEDLLSLSEISLIDMFGRFGYDLYRKARGINASPVKPDRVRKSIGSEKTYGKLLYNEADIKAEISKNVQRVVASLEKNKKVGKTIVLKVRYADFETLTKRMTLEEYTQDFQIIDQVAKAIFDTLEESVFGIRLLGVTVTTLENEHEAIYLDF</sequence>
<name>DPO4_STRA1</name>
<protein>
    <recommendedName>
        <fullName evidence="1">DNA polymerase IV</fullName>
        <shortName evidence="1">Pol IV</shortName>
        <ecNumber evidence="1">2.7.7.7</ecNumber>
    </recommendedName>
</protein>
<comment type="function">
    <text evidence="1">Poorly processive, error-prone DNA polymerase involved in untargeted mutagenesis. Copies undamaged DNA at stalled replication forks, which arise in vivo from mismatched or misaligned primer ends. These misaligned primers can be extended by PolIV. Exhibits no 3'-5' exonuclease (proofreading) activity. May be involved in translesional synthesis, in conjunction with the beta clamp from PolIII.</text>
</comment>
<comment type="catalytic activity">
    <reaction evidence="1">
        <text>DNA(n) + a 2'-deoxyribonucleoside 5'-triphosphate = DNA(n+1) + diphosphate</text>
        <dbReference type="Rhea" id="RHEA:22508"/>
        <dbReference type="Rhea" id="RHEA-COMP:17339"/>
        <dbReference type="Rhea" id="RHEA-COMP:17340"/>
        <dbReference type="ChEBI" id="CHEBI:33019"/>
        <dbReference type="ChEBI" id="CHEBI:61560"/>
        <dbReference type="ChEBI" id="CHEBI:173112"/>
        <dbReference type="EC" id="2.7.7.7"/>
    </reaction>
</comment>
<comment type="cofactor">
    <cofactor evidence="1">
        <name>Mg(2+)</name>
        <dbReference type="ChEBI" id="CHEBI:18420"/>
    </cofactor>
    <text evidence="1">Binds 2 magnesium ions per subunit.</text>
</comment>
<comment type="subunit">
    <text evidence="1">Monomer.</text>
</comment>
<comment type="subcellular location">
    <subcellularLocation>
        <location evidence="1">Cytoplasm</location>
    </subcellularLocation>
</comment>
<comment type="similarity">
    <text evidence="1">Belongs to the DNA polymerase type-Y family.</text>
</comment>
<organism>
    <name type="scientific">Streptococcus agalactiae serotype Ia (strain ATCC 27591 / A909 / CDC SS700)</name>
    <dbReference type="NCBI Taxonomy" id="205921"/>
    <lineage>
        <taxon>Bacteria</taxon>
        <taxon>Bacillati</taxon>
        <taxon>Bacillota</taxon>
        <taxon>Bacilli</taxon>
        <taxon>Lactobacillales</taxon>
        <taxon>Streptococcaceae</taxon>
        <taxon>Streptococcus</taxon>
    </lineage>
</organism>